<evidence type="ECO:0000255" key="1">
    <source>
        <dbReference type="PROSITE-ProRule" id="PRU00285"/>
    </source>
</evidence>
<evidence type="ECO:0000269" key="2">
    <source>
    </source>
</evidence>
<evidence type="ECO:0000305" key="3"/>
<gene>
    <name type="primary">HSP17.6</name>
    <name type="ordered locus">At5g12020</name>
    <name type="ORF">F14F18.190</name>
</gene>
<organism>
    <name type="scientific">Arabidopsis thaliana</name>
    <name type="common">Mouse-ear cress</name>
    <dbReference type="NCBI Taxonomy" id="3702"/>
    <lineage>
        <taxon>Eukaryota</taxon>
        <taxon>Viridiplantae</taxon>
        <taxon>Streptophyta</taxon>
        <taxon>Embryophyta</taxon>
        <taxon>Tracheophyta</taxon>
        <taxon>Spermatophyta</taxon>
        <taxon>Magnoliopsida</taxon>
        <taxon>eudicotyledons</taxon>
        <taxon>Gunneridae</taxon>
        <taxon>Pentapetalae</taxon>
        <taxon>rosids</taxon>
        <taxon>malvids</taxon>
        <taxon>Brassicales</taxon>
        <taxon>Brassicaceae</taxon>
        <taxon>Camelineae</taxon>
        <taxon>Arabidopsis</taxon>
    </lineage>
</organism>
<sequence length="155" mass="17623">MDLGRFPIISILEDMLEVPEDHNNEKTRNNPSRVYMRDAKAMAATPADVIEHPNAYAFVVDMPGIKGDEIKVQVENDNVLVVSGERQRENKENEGVKYVRMERRMGKFMRKFQLPENADLDKISAVCHDGVLKVTVQKLPPPEPKKPKTIQVQVA</sequence>
<keyword id="KW-0963">Cytoplasm</keyword>
<keyword id="KW-1185">Reference proteome</keyword>
<keyword id="KW-0346">Stress response</keyword>
<accession>P29830</accession>
<accession>Q8GWH1</accession>
<proteinExistence type="evidence at transcript level"/>
<feature type="chain" id="PRO_0000125991" description="17.6 kDa class II heat shock protein">
    <location>
        <begin position="1"/>
        <end position="155"/>
    </location>
</feature>
<feature type="domain" description="sHSP" evidence="1">
    <location>
        <begin position="38"/>
        <end position="155"/>
    </location>
</feature>
<comment type="subunit">
    <text>May form oligomeric structures.</text>
</comment>
<comment type="subcellular location">
    <subcellularLocation>
        <location evidence="3">Cytoplasm</location>
    </subcellularLocation>
</comment>
<comment type="developmental stage">
    <text evidence="2">Expressed in seeds from 1 to 4 days after imbibition.</text>
</comment>
<comment type="induction">
    <text evidence="2">By heat shock.</text>
</comment>
<comment type="similarity">
    <text evidence="1">Belongs to the small heat shock protein (HSP20) family.</text>
</comment>
<comment type="sequence caution" evidence="3">
    <conflict type="frameshift">
        <sequence resource="EMBL-CDS" id="BAC43441"/>
    </conflict>
</comment>
<reference key="1">
    <citation type="journal article" date="1992" name="Plant Mol. Biol.">
        <title>An Arabidopsis thaliana cDNA clone encoding a 17.6 kDa class II heat shock protein.</title>
        <authorList>
            <person name="Bartling D."/>
            <person name="Buelter H."/>
            <person name="Liebeton K."/>
            <person name="Weiler E.W."/>
        </authorList>
    </citation>
    <scope>NUCLEOTIDE SEQUENCE [MRNA]</scope>
    <source>
        <strain>cv. Landsberg erecta</strain>
        <tissue>Leaf</tissue>
    </source>
</reference>
<reference key="2">
    <citation type="journal article" date="2000" name="Nature">
        <title>Sequence and analysis of chromosome 5 of the plant Arabidopsis thaliana.</title>
        <authorList>
            <person name="Tabata S."/>
            <person name="Kaneko T."/>
            <person name="Nakamura Y."/>
            <person name="Kotani H."/>
            <person name="Kato T."/>
            <person name="Asamizu E."/>
            <person name="Miyajima N."/>
            <person name="Sasamoto S."/>
            <person name="Kimura T."/>
            <person name="Hosouchi T."/>
            <person name="Kawashima K."/>
            <person name="Kohara M."/>
            <person name="Matsumoto M."/>
            <person name="Matsuno A."/>
            <person name="Muraki A."/>
            <person name="Nakayama S."/>
            <person name="Nakazaki N."/>
            <person name="Naruo K."/>
            <person name="Okumura S."/>
            <person name="Shinpo S."/>
            <person name="Takeuchi C."/>
            <person name="Wada T."/>
            <person name="Watanabe A."/>
            <person name="Yamada M."/>
            <person name="Yasuda M."/>
            <person name="Sato S."/>
            <person name="de la Bastide M."/>
            <person name="Huang E."/>
            <person name="Spiegel L."/>
            <person name="Gnoj L."/>
            <person name="O'Shaughnessy A."/>
            <person name="Preston R."/>
            <person name="Habermann K."/>
            <person name="Murray J."/>
            <person name="Johnson D."/>
            <person name="Rohlfing T."/>
            <person name="Nelson J."/>
            <person name="Stoneking T."/>
            <person name="Pepin K."/>
            <person name="Spieth J."/>
            <person name="Sekhon M."/>
            <person name="Armstrong J."/>
            <person name="Becker M."/>
            <person name="Belter E."/>
            <person name="Cordum H."/>
            <person name="Cordes M."/>
            <person name="Courtney L."/>
            <person name="Courtney W."/>
            <person name="Dante M."/>
            <person name="Du H."/>
            <person name="Edwards J."/>
            <person name="Fryman J."/>
            <person name="Haakensen B."/>
            <person name="Lamar E."/>
            <person name="Latreille P."/>
            <person name="Leonard S."/>
            <person name="Meyer R."/>
            <person name="Mulvaney E."/>
            <person name="Ozersky P."/>
            <person name="Riley A."/>
            <person name="Strowmatt C."/>
            <person name="Wagner-McPherson C."/>
            <person name="Wollam A."/>
            <person name="Yoakum M."/>
            <person name="Bell M."/>
            <person name="Dedhia N."/>
            <person name="Parnell L."/>
            <person name="Shah R."/>
            <person name="Rodriguez M."/>
            <person name="Hoon See L."/>
            <person name="Vil D."/>
            <person name="Baker J."/>
            <person name="Kirchoff K."/>
            <person name="Toth K."/>
            <person name="King L."/>
            <person name="Bahret A."/>
            <person name="Miller B."/>
            <person name="Marra M.A."/>
            <person name="Martienssen R."/>
            <person name="McCombie W.R."/>
            <person name="Wilson R.K."/>
            <person name="Murphy G."/>
            <person name="Bancroft I."/>
            <person name="Volckaert G."/>
            <person name="Wambutt R."/>
            <person name="Duesterhoeft A."/>
            <person name="Stiekema W."/>
            <person name="Pohl T."/>
            <person name="Entian K.-D."/>
            <person name="Terryn N."/>
            <person name="Hartley N."/>
            <person name="Bent E."/>
            <person name="Johnson S."/>
            <person name="Langham S.-A."/>
            <person name="McCullagh B."/>
            <person name="Robben J."/>
            <person name="Grymonprez B."/>
            <person name="Zimmermann W."/>
            <person name="Ramsperger U."/>
            <person name="Wedler H."/>
            <person name="Balke K."/>
            <person name="Wedler E."/>
            <person name="Peters S."/>
            <person name="van Staveren M."/>
            <person name="Dirkse W."/>
            <person name="Mooijman P."/>
            <person name="Klein Lankhorst R."/>
            <person name="Weitzenegger T."/>
            <person name="Bothe G."/>
            <person name="Rose M."/>
            <person name="Hauf J."/>
            <person name="Berneiser S."/>
            <person name="Hempel S."/>
            <person name="Feldpausch M."/>
            <person name="Lamberth S."/>
            <person name="Villarroel R."/>
            <person name="Gielen J."/>
            <person name="Ardiles W."/>
            <person name="Bents O."/>
            <person name="Lemcke K."/>
            <person name="Kolesov G."/>
            <person name="Mayer K.F.X."/>
            <person name="Rudd S."/>
            <person name="Schoof H."/>
            <person name="Schueller C."/>
            <person name="Zaccaria P."/>
            <person name="Mewes H.-W."/>
            <person name="Bevan M."/>
            <person name="Fransz P.F."/>
        </authorList>
    </citation>
    <scope>NUCLEOTIDE SEQUENCE [LARGE SCALE GENOMIC DNA]</scope>
    <source>
        <strain>cv. Columbia</strain>
    </source>
</reference>
<reference key="3">
    <citation type="journal article" date="2017" name="Plant J.">
        <title>Araport11: a complete reannotation of the Arabidopsis thaliana reference genome.</title>
        <authorList>
            <person name="Cheng C.Y."/>
            <person name="Krishnakumar V."/>
            <person name="Chan A.P."/>
            <person name="Thibaud-Nissen F."/>
            <person name="Schobel S."/>
            <person name="Town C.D."/>
        </authorList>
    </citation>
    <scope>GENOME REANNOTATION</scope>
    <source>
        <strain>cv. Columbia</strain>
    </source>
</reference>
<reference key="4">
    <citation type="journal article" date="2002" name="Science">
        <title>Functional annotation of a full-length Arabidopsis cDNA collection.</title>
        <authorList>
            <person name="Seki M."/>
            <person name="Narusaka M."/>
            <person name="Kamiya A."/>
            <person name="Ishida J."/>
            <person name="Satou M."/>
            <person name="Sakurai T."/>
            <person name="Nakajima M."/>
            <person name="Enju A."/>
            <person name="Akiyama K."/>
            <person name="Oono Y."/>
            <person name="Muramatsu M."/>
            <person name="Hayashizaki Y."/>
            <person name="Kawai J."/>
            <person name="Carninci P."/>
            <person name="Itoh M."/>
            <person name="Ishii Y."/>
            <person name="Arakawa T."/>
            <person name="Shibata K."/>
            <person name="Shinagawa A."/>
            <person name="Shinozaki K."/>
        </authorList>
    </citation>
    <scope>NUCLEOTIDE SEQUENCE [LARGE SCALE MRNA]</scope>
    <source>
        <strain>cv. Columbia</strain>
    </source>
</reference>
<reference key="5">
    <citation type="submission" date="2002-03" db="EMBL/GenBank/DDBJ databases">
        <title>Full-length cDNA from Arabidopsis thaliana.</title>
        <authorList>
            <person name="Brover V.V."/>
            <person name="Troukhan M.E."/>
            <person name="Alexandrov N.A."/>
            <person name="Lu Y.-P."/>
            <person name="Flavell R.B."/>
            <person name="Feldmann K.A."/>
        </authorList>
    </citation>
    <scope>NUCLEOTIDE SEQUENCE [LARGE SCALE MRNA]</scope>
</reference>
<reference key="6">
    <citation type="journal article" date="1996" name="Plant J.">
        <title>Further progress towards a catalogue of all Arabidopsis genes: analysis of a set of 5000 non-redundant ESTs.</title>
        <authorList>
            <person name="Cooke R."/>
            <person name="Raynal M."/>
            <person name="Laudie M."/>
            <person name="Grellet F."/>
            <person name="Delseny M."/>
            <person name="Morris P.-C."/>
            <person name="Guerrier D."/>
            <person name="Giraudat J."/>
            <person name="Quigley F."/>
            <person name="Clabault G."/>
            <person name="Li Y.-F."/>
            <person name="Mache R."/>
            <person name="Krivitzky M."/>
            <person name="Gy I.J.-J."/>
            <person name="Kreis M."/>
            <person name="Lecharny A."/>
            <person name="Parmentier Y."/>
            <person name="Marbach J."/>
            <person name="Fleck J."/>
            <person name="Clement B."/>
            <person name="Philipps G."/>
            <person name="Herve C."/>
            <person name="Bardet C."/>
            <person name="Tremousaygue D."/>
            <person name="Lescure B."/>
            <person name="Lacomme C."/>
            <person name="Roby D."/>
            <person name="Jourjon M.-F."/>
            <person name="Chabrier P."/>
            <person name="Charpenteau J.-L."/>
            <person name="Desprez T."/>
            <person name="Amselem J."/>
            <person name="Chiapello H."/>
            <person name="Hoefte H."/>
        </authorList>
    </citation>
    <scope>NUCLEOTIDE SEQUENCE [LARGE SCALE MRNA] OF 1-90</scope>
    <source>
        <strain>cv. Columbia</strain>
        <tissue>Dry seed</tissue>
    </source>
</reference>
<reference key="7">
    <citation type="journal article" date="2001" name="Plant J.">
        <title>At-HSP17.6A, encoding a small heat-shock protein in Arabidopsis, can enhance osmotolerance upon overexpression.</title>
        <authorList>
            <person name="Sun W."/>
            <person name="Bernard C."/>
            <person name="van de Cotte B."/>
            <person name="Van Montagu M."/>
            <person name="Verbruggen N."/>
        </authorList>
    </citation>
    <scope>DEVELOPMENTAL STAGE</scope>
    <scope>INDUCTION</scope>
</reference>
<protein>
    <recommendedName>
        <fullName>17.6 kDa class II heat shock protein</fullName>
    </recommendedName>
    <alternativeName>
        <fullName>17.6 kDa heat shock protein</fullName>
        <shortName>AtHsp17.6</shortName>
    </alternativeName>
</protein>
<dbReference type="EMBL" id="X63443">
    <property type="protein sequence ID" value="CAA45039.1"/>
    <property type="molecule type" value="mRNA"/>
</dbReference>
<dbReference type="EMBL" id="AL163812">
    <property type="protein sequence ID" value="CAB87675.1"/>
    <property type="molecule type" value="Genomic_DNA"/>
</dbReference>
<dbReference type="EMBL" id="CP002688">
    <property type="protein sequence ID" value="AED91751.1"/>
    <property type="molecule type" value="Genomic_DNA"/>
</dbReference>
<dbReference type="EMBL" id="AK118853">
    <property type="protein sequence ID" value="BAC43441.1"/>
    <property type="status" value="ALT_FRAME"/>
    <property type="molecule type" value="mRNA"/>
</dbReference>
<dbReference type="EMBL" id="AY086235">
    <property type="protein sequence ID" value="AAM64311.1"/>
    <property type="molecule type" value="mRNA"/>
</dbReference>
<dbReference type="EMBL" id="Z46682">
    <property type="protein sequence ID" value="CAA86670.1"/>
    <property type="molecule type" value="mRNA"/>
</dbReference>
<dbReference type="PIR" id="S20871">
    <property type="entry name" value="HHMU17"/>
</dbReference>
<dbReference type="SMR" id="P29830"/>
<dbReference type="FunCoup" id="P29830">
    <property type="interactions" value="193"/>
</dbReference>
<dbReference type="STRING" id="3702.P29830"/>
<dbReference type="GlyGen" id="P29830">
    <property type="glycosylation" value="1 site"/>
</dbReference>
<dbReference type="PaxDb" id="3702-AT5G12020.1"/>
<dbReference type="ProteomicsDB" id="232101"/>
<dbReference type="EnsemblPlants" id="AT5G12020.1">
    <property type="protein sequence ID" value="AT5G12020.1"/>
    <property type="gene ID" value="AT5G12020"/>
</dbReference>
<dbReference type="GeneID" id="831075"/>
<dbReference type="Gramene" id="AT5G12020.1">
    <property type="protein sequence ID" value="AT5G12020.1"/>
    <property type="gene ID" value="AT5G12020"/>
</dbReference>
<dbReference type="KEGG" id="ath:AT5G12020"/>
<dbReference type="Araport" id="AT5G12020"/>
<dbReference type="TAIR" id="AT5G12020">
    <property type="gene designation" value="HSP17.6II"/>
</dbReference>
<dbReference type="eggNOG" id="KOG0710">
    <property type="taxonomic scope" value="Eukaryota"/>
</dbReference>
<dbReference type="HOGENOM" id="CLU_046737_5_1_1"/>
<dbReference type="InParanoid" id="P29830"/>
<dbReference type="OMA" id="ADIMEYP"/>
<dbReference type="OrthoDB" id="1431247at2759"/>
<dbReference type="PhylomeDB" id="P29830"/>
<dbReference type="PRO" id="PR:P29830"/>
<dbReference type="Proteomes" id="UP000006548">
    <property type="component" value="Chromosome 5"/>
</dbReference>
<dbReference type="ExpressionAtlas" id="P29830">
    <property type="expression patterns" value="baseline and differential"/>
</dbReference>
<dbReference type="GO" id="GO:0005737">
    <property type="term" value="C:cytoplasm"/>
    <property type="evidence" value="ECO:0007669"/>
    <property type="project" value="UniProtKB-SubCell"/>
</dbReference>
<dbReference type="GO" id="GO:0071456">
    <property type="term" value="P:cellular response to hypoxia"/>
    <property type="evidence" value="ECO:0007007"/>
    <property type="project" value="TAIR"/>
</dbReference>
<dbReference type="GO" id="GO:0009408">
    <property type="term" value="P:response to heat"/>
    <property type="evidence" value="ECO:0000270"/>
    <property type="project" value="UniProtKB"/>
</dbReference>
<dbReference type="CDD" id="cd06464">
    <property type="entry name" value="ACD_sHsps-like"/>
    <property type="match status" value="1"/>
</dbReference>
<dbReference type="FunFam" id="2.60.40.790:FF:000010">
    <property type="entry name" value="17.3 kDa class II heat shock protein-like"/>
    <property type="match status" value="1"/>
</dbReference>
<dbReference type="Gene3D" id="2.60.40.790">
    <property type="match status" value="1"/>
</dbReference>
<dbReference type="InterPro" id="IPR002068">
    <property type="entry name" value="A-crystallin/Hsp20_dom"/>
</dbReference>
<dbReference type="InterPro" id="IPR008978">
    <property type="entry name" value="HSP20-like_chaperone"/>
</dbReference>
<dbReference type="InterPro" id="IPR031107">
    <property type="entry name" value="Small_HSP"/>
</dbReference>
<dbReference type="PANTHER" id="PTHR11527">
    <property type="entry name" value="HEAT-SHOCK PROTEIN 20 FAMILY MEMBER"/>
    <property type="match status" value="1"/>
</dbReference>
<dbReference type="Pfam" id="PF00011">
    <property type="entry name" value="HSP20"/>
    <property type="match status" value="1"/>
</dbReference>
<dbReference type="SUPFAM" id="SSF49764">
    <property type="entry name" value="HSP20-like chaperones"/>
    <property type="match status" value="1"/>
</dbReference>
<dbReference type="PROSITE" id="PS01031">
    <property type="entry name" value="SHSP"/>
    <property type="match status" value="1"/>
</dbReference>
<name>HS176_ARATH</name>